<keyword id="KW-0067">ATP-binding</keyword>
<keyword id="KW-0227">DNA damage</keyword>
<keyword id="KW-0234">DNA repair</keyword>
<keyword id="KW-0238">DNA-binding</keyword>
<keyword id="KW-0547">Nucleotide-binding</keyword>
<protein>
    <recommendedName>
        <fullName evidence="1">DNA mismatch repair protein MutS</fullName>
    </recommendedName>
</protein>
<organism>
    <name type="scientific">Clostridium botulinum (strain 657 / Type Ba4)</name>
    <dbReference type="NCBI Taxonomy" id="515621"/>
    <lineage>
        <taxon>Bacteria</taxon>
        <taxon>Bacillati</taxon>
        <taxon>Bacillota</taxon>
        <taxon>Clostridia</taxon>
        <taxon>Eubacteriales</taxon>
        <taxon>Clostridiaceae</taxon>
        <taxon>Clostridium</taxon>
    </lineage>
</organism>
<proteinExistence type="inferred from homology"/>
<accession>C3KX35</accession>
<name>MUTS_CLOB6</name>
<dbReference type="EMBL" id="CP001083">
    <property type="protein sequence ID" value="ACQ54103.1"/>
    <property type="molecule type" value="Genomic_DNA"/>
</dbReference>
<dbReference type="RefSeq" id="WP_003362818.1">
    <property type="nucleotide sequence ID" value="NC_012658.1"/>
</dbReference>
<dbReference type="SMR" id="C3KX35"/>
<dbReference type="KEGG" id="cbi:CLJ_B1978"/>
<dbReference type="HOGENOM" id="CLU_002472_1_3_9"/>
<dbReference type="Proteomes" id="UP000002333">
    <property type="component" value="Chromosome"/>
</dbReference>
<dbReference type="GO" id="GO:0005829">
    <property type="term" value="C:cytosol"/>
    <property type="evidence" value="ECO:0007669"/>
    <property type="project" value="TreeGrafter"/>
</dbReference>
<dbReference type="GO" id="GO:0005524">
    <property type="term" value="F:ATP binding"/>
    <property type="evidence" value="ECO:0007669"/>
    <property type="project" value="UniProtKB-UniRule"/>
</dbReference>
<dbReference type="GO" id="GO:0140664">
    <property type="term" value="F:ATP-dependent DNA damage sensor activity"/>
    <property type="evidence" value="ECO:0007669"/>
    <property type="project" value="InterPro"/>
</dbReference>
<dbReference type="GO" id="GO:0003684">
    <property type="term" value="F:damaged DNA binding"/>
    <property type="evidence" value="ECO:0007669"/>
    <property type="project" value="UniProtKB-UniRule"/>
</dbReference>
<dbReference type="GO" id="GO:0030983">
    <property type="term" value="F:mismatched DNA binding"/>
    <property type="evidence" value="ECO:0007669"/>
    <property type="project" value="InterPro"/>
</dbReference>
<dbReference type="GO" id="GO:0006298">
    <property type="term" value="P:mismatch repair"/>
    <property type="evidence" value="ECO:0007669"/>
    <property type="project" value="UniProtKB-UniRule"/>
</dbReference>
<dbReference type="CDD" id="cd03284">
    <property type="entry name" value="ABC_MutS1"/>
    <property type="match status" value="1"/>
</dbReference>
<dbReference type="FunFam" id="1.10.1420.10:FF:000007">
    <property type="entry name" value="DNA mismatch repair protein MutS"/>
    <property type="match status" value="1"/>
</dbReference>
<dbReference type="FunFam" id="3.40.1170.10:FF:000001">
    <property type="entry name" value="DNA mismatch repair protein MutS"/>
    <property type="match status" value="1"/>
</dbReference>
<dbReference type="FunFam" id="3.40.50.300:FF:001579">
    <property type="entry name" value="DNA mismatch repair protein MutS"/>
    <property type="match status" value="1"/>
</dbReference>
<dbReference type="Gene3D" id="1.10.1420.10">
    <property type="match status" value="2"/>
</dbReference>
<dbReference type="Gene3D" id="3.40.1170.10">
    <property type="entry name" value="DNA repair protein MutS, domain I"/>
    <property type="match status" value="1"/>
</dbReference>
<dbReference type="Gene3D" id="3.30.420.110">
    <property type="entry name" value="MutS, connector domain"/>
    <property type="match status" value="1"/>
</dbReference>
<dbReference type="Gene3D" id="3.40.50.300">
    <property type="entry name" value="P-loop containing nucleotide triphosphate hydrolases"/>
    <property type="match status" value="1"/>
</dbReference>
<dbReference type="HAMAP" id="MF_00096">
    <property type="entry name" value="MutS"/>
    <property type="match status" value="1"/>
</dbReference>
<dbReference type="InterPro" id="IPR005748">
    <property type="entry name" value="DNA_mismatch_repair_MutS"/>
</dbReference>
<dbReference type="InterPro" id="IPR007695">
    <property type="entry name" value="DNA_mismatch_repair_MutS-lik_N"/>
</dbReference>
<dbReference type="InterPro" id="IPR017261">
    <property type="entry name" value="DNA_mismatch_repair_MutS/MSH"/>
</dbReference>
<dbReference type="InterPro" id="IPR000432">
    <property type="entry name" value="DNA_mismatch_repair_MutS_C"/>
</dbReference>
<dbReference type="InterPro" id="IPR007861">
    <property type="entry name" value="DNA_mismatch_repair_MutS_clamp"/>
</dbReference>
<dbReference type="InterPro" id="IPR007696">
    <property type="entry name" value="DNA_mismatch_repair_MutS_core"/>
</dbReference>
<dbReference type="InterPro" id="IPR016151">
    <property type="entry name" value="DNA_mismatch_repair_MutS_N"/>
</dbReference>
<dbReference type="InterPro" id="IPR036187">
    <property type="entry name" value="DNA_mismatch_repair_MutS_sf"/>
</dbReference>
<dbReference type="InterPro" id="IPR007860">
    <property type="entry name" value="DNA_mmatch_repair_MutS_con_dom"/>
</dbReference>
<dbReference type="InterPro" id="IPR045076">
    <property type="entry name" value="MutS"/>
</dbReference>
<dbReference type="InterPro" id="IPR036678">
    <property type="entry name" value="MutS_con_dom_sf"/>
</dbReference>
<dbReference type="InterPro" id="IPR027417">
    <property type="entry name" value="P-loop_NTPase"/>
</dbReference>
<dbReference type="NCBIfam" id="TIGR01070">
    <property type="entry name" value="mutS1"/>
    <property type="match status" value="1"/>
</dbReference>
<dbReference type="NCBIfam" id="NF003810">
    <property type="entry name" value="PRK05399.1"/>
    <property type="match status" value="1"/>
</dbReference>
<dbReference type="PANTHER" id="PTHR11361:SF34">
    <property type="entry name" value="DNA MISMATCH REPAIR PROTEIN MSH1, MITOCHONDRIAL"/>
    <property type="match status" value="1"/>
</dbReference>
<dbReference type="PANTHER" id="PTHR11361">
    <property type="entry name" value="DNA MISMATCH REPAIR PROTEIN MUTS FAMILY MEMBER"/>
    <property type="match status" value="1"/>
</dbReference>
<dbReference type="Pfam" id="PF01624">
    <property type="entry name" value="MutS_I"/>
    <property type="match status" value="1"/>
</dbReference>
<dbReference type="Pfam" id="PF05188">
    <property type="entry name" value="MutS_II"/>
    <property type="match status" value="1"/>
</dbReference>
<dbReference type="Pfam" id="PF05192">
    <property type="entry name" value="MutS_III"/>
    <property type="match status" value="1"/>
</dbReference>
<dbReference type="Pfam" id="PF05190">
    <property type="entry name" value="MutS_IV"/>
    <property type="match status" value="1"/>
</dbReference>
<dbReference type="Pfam" id="PF00488">
    <property type="entry name" value="MutS_V"/>
    <property type="match status" value="1"/>
</dbReference>
<dbReference type="PIRSF" id="PIRSF037677">
    <property type="entry name" value="DNA_mis_repair_Msh6"/>
    <property type="match status" value="1"/>
</dbReference>
<dbReference type="SMART" id="SM00534">
    <property type="entry name" value="MUTSac"/>
    <property type="match status" value="1"/>
</dbReference>
<dbReference type="SMART" id="SM00533">
    <property type="entry name" value="MUTSd"/>
    <property type="match status" value="1"/>
</dbReference>
<dbReference type="SUPFAM" id="SSF55271">
    <property type="entry name" value="DNA repair protein MutS, domain I"/>
    <property type="match status" value="1"/>
</dbReference>
<dbReference type="SUPFAM" id="SSF53150">
    <property type="entry name" value="DNA repair protein MutS, domain II"/>
    <property type="match status" value="1"/>
</dbReference>
<dbReference type="SUPFAM" id="SSF48334">
    <property type="entry name" value="DNA repair protein MutS, domain III"/>
    <property type="match status" value="1"/>
</dbReference>
<dbReference type="SUPFAM" id="SSF52540">
    <property type="entry name" value="P-loop containing nucleoside triphosphate hydrolases"/>
    <property type="match status" value="1"/>
</dbReference>
<dbReference type="PROSITE" id="PS00486">
    <property type="entry name" value="DNA_MISMATCH_REPAIR_2"/>
    <property type="match status" value="1"/>
</dbReference>
<comment type="function">
    <text evidence="1">This protein is involved in the repair of mismatches in DNA. It is possible that it carries out the mismatch recognition step. This protein has a weak ATPase activity.</text>
</comment>
<comment type="similarity">
    <text evidence="1">Belongs to the DNA mismatch repair MutS family.</text>
</comment>
<reference key="1">
    <citation type="submission" date="2008-05" db="EMBL/GenBank/DDBJ databases">
        <title>Genome sequence of Clostridium botulinum Ba4 strain 657.</title>
        <authorList>
            <person name="Shrivastava S."/>
            <person name="Brown J.L."/>
            <person name="Bruce D."/>
            <person name="Detter C."/>
            <person name="Munk C."/>
            <person name="Smith L.A."/>
            <person name="Smith T.J."/>
            <person name="Sutton G."/>
            <person name="Brettin T.S."/>
        </authorList>
    </citation>
    <scope>NUCLEOTIDE SEQUENCE [LARGE SCALE GENOMIC DNA]</scope>
    <source>
        <strain>657 / Type Ba4</strain>
    </source>
</reference>
<gene>
    <name evidence="1" type="primary">mutS</name>
    <name type="ordered locus">CLJ_B1978</name>
</gene>
<evidence type="ECO:0000255" key="1">
    <source>
        <dbReference type="HAMAP-Rule" id="MF_00096"/>
    </source>
</evidence>
<feature type="chain" id="PRO_1000202732" description="DNA mismatch repair protein MutS">
    <location>
        <begin position="1"/>
        <end position="932"/>
    </location>
</feature>
<feature type="binding site" evidence="1">
    <location>
        <begin position="615"/>
        <end position="622"/>
    </location>
    <ligand>
        <name>ATP</name>
        <dbReference type="ChEBI" id="CHEBI:30616"/>
    </ligand>
</feature>
<sequence length="932" mass="106273">MGLTPMMKQYLEVKESCKDCILFFRLGDFYEMFFEDAKVASKELELVLTGRDCGLEERAPMCGIPYHAANTYIGRLVSAGYKIAICEQLEDPSASKGIVKRGIIKIITPGTYTDSSFLEENKNNYIMSLYLDDNMCAMSFADISTGEFNSTHSNFKEAVVLDEISKFAPREIVLEENIKESFIHTIKERFPNISISKIKEENFAYNIDNNLKEQFNNFNENEYETIVKKSANGLLYYIFHTQKNILSNINKIDYYSIVDYLTIDVNSRRNLEITENLREKTKKGSLLWVLDKTNTAMGGRQLRRWIEQPLINKNPIENRLNAVEELLNNISLQEDLKEDLKSIYDIERIVGKVASKSVNAKELISLKCSIGKVPYIKKYLSSFKSDLFLNMEKCIDTLEDIHKLLDKALLDNPSLSVKEGNIIKEGFNEEVDSLREAKSNGKKWIASLEQKEKEETGIKSLKVSYNKVFGYFIEITKANLNLVPEGRYIRKQTLSNAERYITPELKEMEEKILGAEEKLIDIEYKLFTKIRDFIEENIDRMQKTARIISDIDCLCSLATVALENNYIKPNINAKDEILIEEGRHPVVEKVIPKGEFISNDSLIDTKENQLILITGPNMAGKSTYMRQVALITIMAQIGSFVPAKKANISICDKIFTRIGASDDLAAGKSTFMVEMWEVSNILKNATSKSLVLLDEVGRGTSTYDGLSIAWSVIEYICNNKNLRCKTLFATHYHELTKLEDNIEGVKNYSVSVSELENEIVFLRKIIRGGADQSYGIEVAKLAGLPSPVINRAKEILQHIEGDKEENSLNITPSKEYKSKDYIEVSKDTLNTKNNLESEIKHDTLSETNTATIIEDESTKEHLSSNKKQINCKRNGEKSIKKEVAVDSFQINFEHIKKDKIIEEIKNIDILNMTPMEGFNKLYDIINKTKDID</sequence>